<reference key="1">
    <citation type="journal article" date="2004" name="Nat. Biotechnol.">
        <title>The genome sequence of the capnophilic rumen bacterium Mannheimia succiniciproducens.</title>
        <authorList>
            <person name="Hong S.H."/>
            <person name="Kim J.S."/>
            <person name="Lee S.Y."/>
            <person name="In Y.H."/>
            <person name="Choi S.S."/>
            <person name="Rih J.-K."/>
            <person name="Kim C.H."/>
            <person name="Jeong H."/>
            <person name="Hur C.G."/>
            <person name="Kim J.J."/>
        </authorList>
    </citation>
    <scope>NUCLEOTIDE SEQUENCE [LARGE SCALE GENOMIC DNA]</scope>
    <source>
        <strain>KCTC 0769BP / MBEL55E</strain>
    </source>
</reference>
<sequence>MQVPYLEFDNVSKSFPGVKALQNISFKCYEGKVHALMGENGAGKSTLLKILSGNYLPSEGKLSIGGRQLVFRNTKEALLAGVAIIYQELNIVPEMTVAENLCLGQLPHSFGIVDKAELIERTQQYLDKLDLNISPNTPLKELSIGQWQMIEIAKALSRGAKIIAFDEPTSSLSAPEIEKLFSVINELRDEGKVILYVSHRMEEIFRISDEITVLKDGQFVETFSDLSKITNDDLVRSMVGRNLGDIYHYRPREVGDVRLKIAHLSGEKLQGDFSLTVRAGEVLGLFGLVGAGRSELLKVIFGADPCVSGSIELDGKTLSIRSPKDAIEQGIVLCPEDRKKEGIVPTASVGENINISARRLHNFFKFIINDKWEKKNAEKQRQQMNVKTPSIEQLIVNLSGGNQQKAILGRWLSEDIKVLLLDEPTRGIDVGAKSEIYDLIFKLADQKLAIIVVSSDLPEVIGVSDRIMVMRAHQITGVVERADATEEKVLKLAMVESLNVGD</sequence>
<protein>
    <recommendedName>
        <fullName evidence="1">Arabinose import ATP-binding protein AraG</fullName>
        <ecNumber evidence="1">7.5.2.12</ecNumber>
    </recommendedName>
</protein>
<name>ARAG_MANSM</name>
<evidence type="ECO:0000255" key="1">
    <source>
        <dbReference type="HAMAP-Rule" id="MF_01721"/>
    </source>
</evidence>
<gene>
    <name evidence="1" type="primary">araG</name>
    <name type="ordered locus">MS0062</name>
</gene>
<accession>Q65WJ1</accession>
<comment type="function">
    <text evidence="1">Part of the ABC transporter complex AraFGH involved in arabinose import. Responsible for energy coupling to the transport system.</text>
</comment>
<comment type="catalytic activity">
    <reaction evidence="1">
        <text>L-arabinose(out) + ATP + H2O = L-arabinose(in) + ADP + phosphate + H(+)</text>
        <dbReference type="Rhea" id="RHEA:30007"/>
        <dbReference type="ChEBI" id="CHEBI:15377"/>
        <dbReference type="ChEBI" id="CHEBI:15378"/>
        <dbReference type="ChEBI" id="CHEBI:17535"/>
        <dbReference type="ChEBI" id="CHEBI:30616"/>
        <dbReference type="ChEBI" id="CHEBI:43474"/>
        <dbReference type="ChEBI" id="CHEBI:456216"/>
        <dbReference type="EC" id="7.5.2.12"/>
    </reaction>
</comment>
<comment type="subunit">
    <text evidence="1">The complex is composed of two ATP-binding proteins (AraG), two transmembrane proteins (AraH) and a solute-binding protein (AraF).</text>
</comment>
<comment type="subcellular location">
    <subcellularLocation>
        <location evidence="1">Cell inner membrane</location>
        <topology evidence="1">Peripheral membrane protein</topology>
    </subcellularLocation>
</comment>
<comment type="similarity">
    <text evidence="1">Belongs to the ABC transporter superfamily. Arabinose importer (TC 3.A.1.2.2) family.</text>
</comment>
<keyword id="KW-0067">ATP-binding</keyword>
<keyword id="KW-0997">Cell inner membrane</keyword>
<keyword id="KW-1003">Cell membrane</keyword>
<keyword id="KW-0472">Membrane</keyword>
<keyword id="KW-0547">Nucleotide-binding</keyword>
<keyword id="KW-0677">Repeat</keyword>
<keyword id="KW-0762">Sugar transport</keyword>
<keyword id="KW-1278">Translocase</keyword>
<keyword id="KW-0813">Transport</keyword>
<feature type="chain" id="PRO_0000270469" description="Arabinose import ATP-binding protein AraG">
    <location>
        <begin position="1"/>
        <end position="502"/>
    </location>
</feature>
<feature type="domain" description="ABC transporter 1" evidence="1">
    <location>
        <begin position="6"/>
        <end position="241"/>
    </location>
</feature>
<feature type="domain" description="ABC transporter 2" evidence="1">
    <location>
        <begin position="252"/>
        <end position="497"/>
    </location>
</feature>
<feature type="binding site" evidence="1">
    <location>
        <begin position="38"/>
        <end position="45"/>
    </location>
    <ligand>
        <name>ATP</name>
        <dbReference type="ChEBI" id="CHEBI:30616"/>
    </ligand>
</feature>
<dbReference type="EC" id="7.5.2.12" evidence="1"/>
<dbReference type="EMBL" id="AE016827">
    <property type="protein sequence ID" value="AAU36669.1"/>
    <property type="molecule type" value="Genomic_DNA"/>
</dbReference>
<dbReference type="RefSeq" id="WP_011199246.1">
    <property type="nucleotide sequence ID" value="NC_006300.1"/>
</dbReference>
<dbReference type="SMR" id="Q65WJ1"/>
<dbReference type="STRING" id="221988.MS0062"/>
<dbReference type="KEGG" id="msu:MS0062"/>
<dbReference type="eggNOG" id="COG1129">
    <property type="taxonomic scope" value="Bacteria"/>
</dbReference>
<dbReference type="HOGENOM" id="CLU_000604_92_3_6"/>
<dbReference type="OrthoDB" id="9776369at2"/>
<dbReference type="Proteomes" id="UP000000607">
    <property type="component" value="Chromosome"/>
</dbReference>
<dbReference type="GO" id="GO:0005886">
    <property type="term" value="C:plasma membrane"/>
    <property type="evidence" value="ECO:0007669"/>
    <property type="project" value="UniProtKB-SubCell"/>
</dbReference>
<dbReference type="GO" id="GO:0015612">
    <property type="term" value="F:ABC-type L-arabinose transporter activity"/>
    <property type="evidence" value="ECO:0007669"/>
    <property type="project" value="UniProtKB-EC"/>
</dbReference>
<dbReference type="GO" id="GO:0005524">
    <property type="term" value="F:ATP binding"/>
    <property type="evidence" value="ECO:0007669"/>
    <property type="project" value="UniProtKB-KW"/>
</dbReference>
<dbReference type="GO" id="GO:0016887">
    <property type="term" value="F:ATP hydrolysis activity"/>
    <property type="evidence" value="ECO:0007669"/>
    <property type="project" value="InterPro"/>
</dbReference>
<dbReference type="CDD" id="cd03216">
    <property type="entry name" value="ABC_Carb_Monos_I"/>
    <property type="match status" value="1"/>
</dbReference>
<dbReference type="CDD" id="cd03215">
    <property type="entry name" value="ABC_Carb_Monos_II"/>
    <property type="match status" value="1"/>
</dbReference>
<dbReference type="FunFam" id="3.40.50.300:FF:000126">
    <property type="entry name" value="Galactose/methyl galactoside import ATP-binding protein MglA"/>
    <property type="match status" value="1"/>
</dbReference>
<dbReference type="FunFam" id="3.40.50.300:FF:000127">
    <property type="entry name" value="Ribose import ATP-binding protein RbsA"/>
    <property type="match status" value="1"/>
</dbReference>
<dbReference type="Gene3D" id="3.40.50.300">
    <property type="entry name" value="P-loop containing nucleotide triphosphate hydrolases"/>
    <property type="match status" value="2"/>
</dbReference>
<dbReference type="InterPro" id="IPR003593">
    <property type="entry name" value="AAA+_ATPase"/>
</dbReference>
<dbReference type="InterPro" id="IPR050107">
    <property type="entry name" value="ABC_carbohydrate_import_ATPase"/>
</dbReference>
<dbReference type="InterPro" id="IPR003439">
    <property type="entry name" value="ABC_transporter-like_ATP-bd"/>
</dbReference>
<dbReference type="InterPro" id="IPR017871">
    <property type="entry name" value="ABC_transporter-like_CS"/>
</dbReference>
<dbReference type="InterPro" id="IPR027417">
    <property type="entry name" value="P-loop_NTPase"/>
</dbReference>
<dbReference type="NCBIfam" id="NF008442">
    <property type="entry name" value="PRK11288.1"/>
    <property type="match status" value="1"/>
</dbReference>
<dbReference type="PANTHER" id="PTHR43790:SF6">
    <property type="entry name" value="ARABINOSE IMPORT ATP-BINDING PROTEIN ARAG"/>
    <property type="match status" value="1"/>
</dbReference>
<dbReference type="PANTHER" id="PTHR43790">
    <property type="entry name" value="CARBOHYDRATE TRANSPORT ATP-BINDING PROTEIN MG119-RELATED"/>
    <property type="match status" value="1"/>
</dbReference>
<dbReference type="Pfam" id="PF00005">
    <property type="entry name" value="ABC_tran"/>
    <property type="match status" value="2"/>
</dbReference>
<dbReference type="SMART" id="SM00382">
    <property type="entry name" value="AAA"/>
    <property type="match status" value="2"/>
</dbReference>
<dbReference type="SUPFAM" id="SSF52540">
    <property type="entry name" value="P-loop containing nucleoside triphosphate hydrolases"/>
    <property type="match status" value="2"/>
</dbReference>
<dbReference type="PROSITE" id="PS00211">
    <property type="entry name" value="ABC_TRANSPORTER_1"/>
    <property type="match status" value="1"/>
</dbReference>
<dbReference type="PROSITE" id="PS50893">
    <property type="entry name" value="ABC_TRANSPORTER_2"/>
    <property type="match status" value="2"/>
</dbReference>
<dbReference type="PROSITE" id="PS51268">
    <property type="entry name" value="ARAG"/>
    <property type="match status" value="1"/>
</dbReference>
<proteinExistence type="inferred from homology"/>
<organism>
    <name type="scientific">Mannheimia succiniciproducens (strain KCTC 0769BP / MBEL55E)</name>
    <dbReference type="NCBI Taxonomy" id="221988"/>
    <lineage>
        <taxon>Bacteria</taxon>
        <taxon>Pseudomonadati</taxon>
        <taxon>Pseudomonadota</taxon>
        <taxon>Gammaproteobacteria</taxon>
        <taxon>Pasteurellales</taxon>
        <taxon>Pasteurellaceae</taxon>
        <taxon>Basfia</taxon>
    </lineage>
</organism>